<feature type="chain" id="PRO_1000044351" description="Sec-independent protein translocase protein TatA">
    <location>
        <begin position="1"/>
        <end position="77"/>
    </location>
</feature>
<feature type="transmembrane region" description="Helical" evidence="1">
    <location>
        <begin position="1"/>
        <end position="21"/>
    </location>
</feature>
<feature type="region of interest" description="Disordered" evidence="2">
    <location>
        <begin position="50"/>
        <end position="77"/>
    </location>
</feature>
<feature type="compositionally biased region" description="Polar residues" evidence="2">
    <location>
        <begin position="53"/>
        <end position="62"/>
    </location>
</feature>
<feature type="compositionally biased region" description="Basic and acidic residues" evidence="2">
    <location>
        <begin position="66"/>
        <end position="77"/>
    </location>
</feature>
<evidence type="ECO:0000255" key="1">
    <source>
        <dbReference type="HAMAP-Rule" id="MF_00236"/>
    </source>
</evidence>
<evidence type="ECO:0000256" key="2">
    <source>
        <dbReference type="SAM" id="MobiDB-lite"/>
    </source>
</evidence>
<sequence>MGSFSIWHWLIVLVIVMLVFGTKKLRNIGQDLGGAVKGFKDGMKDADAAADASTQQKISGGQTLEGEAREKVEKTHS</sequence>
<reference key="1">
    <citation type="journal article" date="2006" name="Nat. Biotechnol.">
        <title>Complete genome of the mutualistic, N2-fixing grass endophyte Azoarcus sp. strain BH72.</title>
        <authorList>
            <person name="Krause A."/>
            <person name="Ramakumar A."/>
            <person name="Bartels D."/>
            <person name="Battistoni F."/>
            <person name="Bekel T."/>
            <person name="Boch J."/>
            <person name="Boehm M."/>
            <person name="Friedrich F."/>
            <person name="Hurek T."/>
            <person name="Krause L."/>
            <person name="Linke B."/>
            <person name="McHardy A.C."/>
            <person name="Sarkar A."/>
            <person name="Schneiker S."/>
            <person name="Syed A.A."/>
            <person name="Thauer R."/>
            <person name="Vorhoelter F.-J."/>
            <person name="Weidner S."/>
            <person name="Puehler A."/>
            <person name="Reinhold-Hurek B."/>
            <person name="Kaiser O."/>
            <person name="Goesmann A."/>
        </authorList>
    </citation>
    <scope>NUCLEOTIDE SEQUENCE [LARGE SCALE GENOMIC DNA]</scope>
    <source>
        <strain>BH72</strain>
    </source>
</reference>
<gene>
    <name evidence="1" type="primary">tatA</name>
    <name type="ordered locus">azo3340</name>
</gene>
<organism>
    <name type="scientific">Azoarcus sp. (strain BH72)</name>
    <dbReference type="NCBI Taxonomy" id="418699"/>
    <lineage>
        <taxon>Bacteria</taxon>
        <taxon>Pseudomonadati</taxon>
        <taxon>Pseudomonadota</taxon>
        <taxon>Betaproteobacteria</taxon>
        <taxon>Rhodocyclales</taxon>
        <taxon>Zoogloeaceae</taxon>
        <taxon>Azoarcus</taxon>
    </lineage>
</organism>
<keyword id="KW-0997">Cell inner membrane</keyword>
<keyword id="KW-1003">Cell membrane</keyword>
<keyword id="KW-0472">Membrane</keyword>
<keyword id="KW-0653">Protein transport</keyword>
<keyword id="KW-1185">Reference proteome</keyword>
<keyword id="KW-0811">Translocation</keyword>
<keyword id="KW-0812">Transmembrane</keyword>
<keyword id="KW-1133">Transmembrane helix</keyword>
<keyword id="KW-0813">Transport</keyword>
<accession>A1KAV0</accession>
<protein>
    <recommendedName>
        <fullName evidence="1">Sec-independent protein translocase protein TatA</fullName>
    </recommendedName>
</protein>
<name>TATA_AZOSB</name>
<dbReference type="EMBL" id="AM406670">
    <property type="protein sequence ID" value="CAL95956.1"/>
    <property type="molecule type" value="Genomic_DNA"/>
</dbReference>
<dbReference type="RefSeq" id="WP_011767063.1">
    <property type="nucleotide sequence ID" value="NC_008702.1"/>
</dbReference>
<dbReference type="SMR" id="A1KAV0"/>
<dbReference type="STRING" id="62928.azo3340"/>
<dbReference type="KEGG" id="aoa:dqs_3478"/>
<dbReference type="KEGG" id="azo:azo3340"/>
<dbReference type="eggNOG" id="COG1826">
    <property type="taxonomic scope" value="Bacteria"/>
</dbReference>
<dbReference type="HOGENOM" id="CLU_086034_5_1_4"/>
<dbReference type="OrthoDB" id="7066617at2"/>
<dbReference type="Proteomes" id="UP000002588">
    <property type="component" value="Chromosome"/>
</dbReference>
<dbReference type="GO" id="GO:0033281">
    <property type="term" value="C:TAT protein transport complex"/>
    <property type="evidence" value="ECO:0007669"/>
    <property type="project" value="UniProtKB-UniRule"/>
</dbReference>
<dbReference type="GO" id="GO:0008320">
    <property type="term" value="F:protein transmembrane transporter activity"/>
    <property type="evidence" value="ECO:0007669"/>
    <property type="project" value="UniProtKB-UniRule"/>
</dbReference>
<dbReference type="GO" id="GO:0043953">
    <property type="term" value="P:protein transport by the Tat complex"/>
    <property type="evidence" value="ECO:0007669"/>
    <property type="project" value="UniProtKB-UniRule"/>
</dbReference>
<dbReference type="Gene3D" id="1.20.5.3310">
    <property type="match status" value="1"/>
</dbReference>
<dbReference type="HAMAP" id="MF_00236">
    <property type="entry name" value="TatA_E"/>
    <property type="match status" value="1"/>
</dbReference>
<dbReference type="InterPro" id="IPR003369">
    <property type="entry name" value="TatA/B/E"/>
</dbReference>
<dbReference type="InterPro" id="IPR006312">
    <property type="entry name" value="TatA/E"/>
</dbReference>
<dbReference type="NCBIfam" id="NF002813">
    <property type="entry name" value="PRK02958.1"/>
    <property type="match status" value="1"/>
</dbReference>
<dbReference type="NCBIfam" id="TIGR01411">
    <property type="entry name" value="tatAE"/>
    <property type="match status" value="1"/>
</dbReference>
<dbReference type="PANTHER" id="PTHR42982">
    <property type="entry name" value="SEC-INDEPENDENT PROTEIN TRANSLOCASE PROTEIN TATA"/>
    <property type="match status" value="1"/>
</dbReference>
<dbReference type="PANTHER" id="PTHR42982:SF1">
    <property type="entry name" value="SEC-INDEPENDENT PROTEIN TRANSLOCASE PROTEIN TATA"/>
    <property type="match status" value="1"/>
</dbReference>
<dbReference type="Pfam" id="PF02416">
    <property type="entry name" value="TatA_B_E"/>
    <property type="match status" value="1"/>
</dbReference>
<proteinExistence type="inferred from homology"/>
<comment type="function">
    <text evidence="1">Part of the twin-arginine translocation (Tat) system that transports large folded proteins containing a characteristic twin-arginine motif in their signal peptide across membranes. TatA could form the protein-conducting channel of the Tat system.</text>
</comment>
<comment type="subunit">
    <text evidence="1">The Tat system comprises two distinct complexes: a TatABC complex, containing multiple copies of TatA, TatB and TatC subunits, and a separate TatA complex, containing only TatA subunits. Substrates initially bind to the TatABC complex, which probably triggers association of the separate TatA complex to form the active translocon.</text>
</comment>
<comment type="subcellular location">
    <subcellularLocation>
        <location evidence="1">Cell inner membrane</location>
        <topology evidence="1">Single-pass membrane protein</topology>
    </subcellularLocation>
</comment>
<comment type="similarity">
    <text evidence="1">Belongs to the TatA/E family.</text>
</comment>